<comment type="function">
    <text>Involved in oxygen transport from the lung to the various peripheral tissues.</text>
</comment>
<comment type="subunit">
    <text>Heterotetramer of two alpha chains and two beta chains.</text>
</comment>
<comment type="tissue specificity">
    <text>Red blood cells.</text>
</comment>
<comment type="similarity">
    <text evidence="3">Belongs to the globin family.</text>
</comment>
<protein>
    <recommendedName>
        <fullName>Hemoglobin subunit beta</fullName>
    </recommendedName>
    <alternativeName>
        <fullName>Beta-globin</fullName>
    </alternativeName>
    <alternativeName>
        <fullName>Hemoglobin beta chain</fullName>
    </alternativeName>
</protein>
<reference key="1">
    <citation type="journal article" date="1984" name="J. Chem. Soc. Pak.">
        <title>The primary structure of Minke-whale (Balenoptera acutorosterata - Cetacea) hemoglobin.</title>
        <authorList>
            <person name="Abbasi A."/>
            <person name="Rucknagel P."/>
            <person name="Matsuda G."/>
            <person name="Zaidi Z.H."/>
            <person name="Braunitzer G."/>
        </authorList>
    </citation>
    <scope>PROTEIN SEQUENCE</scope>
</reference>
<name>HBB_BALAC</name>
<proteinExistence type="evidence at protein level"/>
<dbReference type="PIR" id="S06521">
    <property type="entry name" value="HBWHK"/>
</dbReference>
<dbReference type="SMR" id="P18984"/>
<dbReference type="GO" id="GO:0072562">
    <property type="term" value="C:blood microparticle"/>
    <property type="evidence" value="ECO:0007669"/>
    <property type="project" value="TreeGrafter"/>
</dbReference>
<dbReference type="GO" id="GO:0031838">
    <property type="term" value="C:haptoglobin-hemoglobin complex"/>
    <property type="evidence" value="ECO:0007669"/>
    <property type="project" value="TreeGrafter"/>
</dbReference>
<dbReference type="GO" id="GO:0005833">
    <property type="term" value="C:hemoglobin complex"/>
    <property type="evidence" value="ECO:0007669"/>
    <property type="project" value="InterPro"/>
</dbReference>
<dbReference type="GO" id="GO:0031720">
    <property type="term" value="F:haptoglobin binding"/>
    <property type="evidence" value="ECO:0007669"/>
    <property type="project" value="TreeGrafter"/>
</dbReference>
<dbReference type="GO" id="GO:0020037">
    <property type="term" value="F:heme binding"/>
    <property type="evidence" value="ECO:0007669"/>
    <property type="project" value="InterPro"/>
</dbReference>
<dbReference type="GO" id="GO:0031721">
    <property type="term" value="F:hemoglobin alpha binding"/>
    <property type="evidence" value="ECO:0007669"/>
    <property type="project" value="TreeGrafter"/>
</dbReference>
<dbReference type="GO" id="GO:0046872">
    <property type="term" value="F:metal ion binding"/>
    <property type="evidence" value="ECO:0007669"/>
    <property type="project" value="UniProtKB-KW"/>
</dbReference>
<dbReference type="GO" id="GO:0043177">
    <property type="term" value="F:organic acid binding"/>
    <property type="evidence" value="ECO:0007669"/>
    <property type="project" value="TreeGrafter"/>
</dbReference>
<dbReference type="GO" id="GO:0019825">
    <property type="term" value="F:oxygen binding"/>
    <property type="evidence" value="ECO:0007669"/>
    <property type="project" value="InterPro"/>
</dbReference>
<dbReference type="GO" id="GO:0005344">
    <property type="term" value="F:oxygen carrier activity"/>
    <property type="evidence" value="ECO:0007669"/>
    <property type="project" value="UniProtKB-KW"/>
</dbReference>
<dbReference type="GO" id="GO:0004601">
    <property type="term" value="F:peroxidase activity"/>
    <property type="evidence" value="ECO:0007669"/>
    <property type="project" value="TreeGrafter"/>
</dbReference>
<dbReference type="GO" id="GO:0042744">
    <property type="term" value="P:hydrogen peroxide catabolic process"/>
    <property type="evidence" value="ECO:0007669"/>
    <property type="project" value="TreeGrafter"/>
</dbReference>
<dbReference type="CDD" id="cd08925">
    <property type="entry name" value="Hb-beta-like"/>
    <property type="match status" value="1"/>
</dbReference>
<dbReference type="FunFam" id="1.10.490.10:FF:000001">
    <property type="entry name" value="Hemoglobin subunit beta"/>
    <property type="match status" value="1"/>
</dbReference>
<dbReference type="Gene3D" id="1.10.490.10">
    <property type="entry name" value="Globins"/>
    <property type="match status" value="1"/>
</dbReference>
<dbReference type="InterPro" id="IPR000971">
    <property type="entry name" value="Globin"/>
</dbReference>
<dbReference type="InterPro" id="IPR009050">
    <property type="entry name" value="Globin-like_sf"/>
</dbReference>
<dbReference type="InterPro" id="IPR012292">
    <property type="entry name" value="Globin/Proto"/>
</dbReference>
<dbReference type="InterPro" id="IPR002337">
    <property type="entry name" value="Hemoglobin_b"/>
</dbReference>
<dbReference type="InterPro" id="IPR050056">
    <property type="entry name" value="Hemoglobin_oxygen_transport"/>
</dbReference>
<dbReference type="PANTHER" id="PTHR11442">
    <property type="entry name" value="HEMOGLOBIN FAMILY MEMBER"/>
    <property type="match status" value="1"/>
</dbReference>
<dbReference type="PANTHER" id="PTHR11442:SF42">
    <property type="entry name" value="HEMOGLOBIN SUBUNIT BETA"/>
    <property type="match status" value="1"/>
</dbReference>
<dbReference type="Pfam" id="PF00042">
    <property type="entry name" value="Globin"/>
    <property type="match status" value="1"/>
</dbReference>
<dbReference type="PRINTS" id="PR00814">
    <property type="entry name" value="BETAHAEM"/>
</dbReference>
<dbReference type="SUPFAM" id="SSF46458">
    <property type="entry name" value="Globin-like"/>
    <property type="match status" value="1"/>
</dbReference>
<dbReference type="PROSITE" id="PS01033">
    <property type="entry name" value="GLOBIN"/>
    <property type="match status" value="1"/>
</dbReference>
<organism>
    <name type="scientific">Balaenoptera acutorostrata</name>
    <name type="common">Common minke whale</name>
    <name type="synonym">Balaena rostrata</name>
    <dbReference type="NCBI Taxonomy" id="9767"/>
    <lineage>
        <taxon>Eukaryota</taxon>
        <taxon>Metazoa</taxon>
        <taxon>Chordata</taxon>
        <taxon>Craniata</taxon>
        <taxon>Vertebrata</taxon>
        <taxon>Euteleostomi</taxon>
        <taxon>Mammalia</taxon>
        <taxon>Eutheria</taxon>
        <taxon>Laurasiatheria</taxon>
        <taxon>Artiodactyla</taxon>
        <taxon>Whippomorpha</taxon>
        <taxon>Cetacea</taxon>
        <taxon>Mysticeti</taxon>
        <taxon>Balaenopteridae</taxon>
        <taxon>Balaenoptera</taxon>
    </lineage>
</organism>
<accession>P18984</accession>
<gene>
    <name type="primary">HBB</name>
</gene>
<sequence>VHLTAEEKSAVTALWAKVNVEEVGGEALGRLLVVYPWTQRFFEAFGDLSTADAVMKNPKVKAHGKKVLASFSDGLKHLDDLKGTFATLSELHCDKLHVDPENFRLLGNVLVIVLARHFGKEFTPELQAAYQKVVAGVANALAHKYH</sequence>
<evidence type="ECO:0000250" key="1">
    <source>
        <dbReference type="UniProtKB" id="P02086"/>
    </source>
</evidence>
<evidence type="ECO:0000250" key="2">
    <source>
        <dbReference type="UniProtKB" id="P68871"/>
    </source>
</evidence>
<evidence type="ECO:0000255" key="3">
    <source>
        <dbReference type="PROSITE-ProRule" id="PRU00238"/>
    </source>
</evidence>
<keyword id="KW-0007">Acetylation</keyword>
<keyword id="KW-0903">Direct protein sequencing</keyword>
<keyword id="KW-0349">Heme</keyword>
<keyword id="KW-0408">Iron</keyword>
<keyword id="KW-0479">Metal-binding</keyword>
<keyword id="KW-0561">Oxygen transport</keyword>
<keyword id="KW-0597">Phosphoprotein</keyword>
<keyword id="KW-0702">S-nitrosylation</keyword>
<keyword id="KW-0813">Transport</keyword>
<feature type="chain" id="PRO_0000052886" description="Hemoglobin subunit beta">
    <location>
        <begin position="1"/>
        <end position="146"/>
    </location>
</feature>
<feature type="domain" description="Globin" evidence="3">
    <location>
        <begin position="2"/>
        <end position="146"/>
    </location>
</feature>
<feature type="binding site" description="distal binding residue">
    <location>
        <position position="63"/>
    </location>
    <ligand>
        <name>heme b</name>
        <dbReference type="ChEBI" id="CHEBI:60344"/>
    </ligand>
    <ligandPart>
        <name>Fe</name>
        <dbReference type="ChEBI" id="CHEBI:18248"/>
    </ligandPart>
</feature>
<feature type="binding site" description="proximal binding residue">
    <location>
        <position position="92"/>
    </location>
    <ligand>
        <name>heme b</name>
        <dbReference type="ChEBI" id="CHEBI:60344"/>
    </ligand>
    <ligandPart>
        <name>Fe</name>
        <dbReference type="ChEBI" id="CHEBI:18248"/>
    </ligandPart>
</feature>
<feature type="modified residue" description="N-acetylvaline" evidence="1">
    <location>
        <position position="1"/>
    </location>
</feature>
<feature type="modified residue" description="Phosphothreonine" evidence="2">
    <location>
        <position position="12"/>
    </location>
</feature>
<feature type="modified residue" description="N6-acetyllysine" evidence="2">
    <location>
        <position position="59"/>
    </location>
</feature>
<feature type="modified residue" description="N6-acetyllysine" evidence="2">
    <location>
        <position position="82"/>
    </location>
</feature>
<feature type="modified residue" description="S-nitrosocysteine" evidence="2">
    <location>
        <position position="93"/>
    </location>
</feature>
<feature type="modified residue" description="N6-acetyllysine" evidence="2">
    <location>
        <position position="144"/>
    </location>
</feature>
<feature type="sequence variant">
    <original>S</original>
    <variation>A</variation>
    <location>
        <position position="72"/>
    </location>
</feature>
<feature type="sequence variant">
    <original>T</original>
    <variation>A</variation>
    <location>
        <position position="87"/>
    </location>
</feature>
<feature type="sequence variant">
    <original>T</original>
    <variation>L</variation>
    <location>
        <position position="123"/>
    </location>
</feature>
<feature type="sequence variant">
    <original>A</original>
    <variation>S</variation>
    <location>
        <position position="128"/>
    </location>
</feature>